<evidence type="ECO:0000255" key="1">
    <source>
        <dbReference type="HAMAP-Rule" id="MF_01045"/>
    </source>
</evidence>
<accession>B5R890</accession>
<comment type="function">
    <text evidence="1">Catalyzes the alpha,beta-elimination reaction of D-cysteine and of several D-cysteine derivatives. It could be a defense mechanism against D-cysteine.</text>
</comment>
<comment type="catalytic activity">
    <reaction evidence="1">
        <text>D-cysteine + H2O = hydrogen sulfide + pyruvate + NH4(+) + H(+)</text>
        <dbReference type="Rhea" id="RHEA:11268"/>
        <dbReference type="ChEBI" id="CHEBI:15361"/>
        <dbReference type="ChEBI" id="CHEBI:15377"/>
        <dbReference type="ChEBI" id="CHEBI:15378"/>
        <dbReference type="ChEBI" id="CHEBI:28938"/>
        <dbReference type="ChEBI" id="CHEBI:29919"/>
        <dbReference type="ChEBI" id="CHEBI:35236"/>
        <dbReference type="EC" id="4.4.1.15"/>
    </reaction>
</comment>
<comment type="cofactor">
    <cofactor evidence="1">
        <name>pyridoxal 5'-phosphate</name>
        <dbReference type="ChEBI" id="CHEBI:597326"/>
    </cofactor>
</comment>
<comment type="subunit">
    <text evidence="1">Homodimer.</text>
</comment>
<comment type="similarity">
    <text evidence="1">Belongs to the ACC deaminase/D-cysteine desulfhydrase family.</text>
</comment>
<sequence>MPLHHLTRFPRLELIGAPTPLEYLPRLSDYLGREIYIKRDDVTPIAMGGNKLRKLEFLVADALREGADTLITAGAIQSNHVRQTAAVAAKLGLHCVALLENPIGTTAENYLTNGNRLLLDLFNTQIEMCDALTDPDAQLQTLATRIEAQGFRPYVIPVGGSSALGAMGYVESALEIAQQCEEVVGLSSVVVASGSAGTHAGLAVGLEHLMPDVELIGVTVSRSVAEQKPKVIALQQAIAGQLALTATADIHLWDDYFAPGYGVPNDAGMEAVKLLASLEGVLLDPVYTGKAMAGLIDGISQKRFNDDGPILFIHTGGAPALFAYHPHV</sequence>
<keyword id="KW-0456">Lyase</keyword>
<keyword id="KW-0663">Pyridoxal phosphate</keyword>
<organism>
    <name type="scientific">Salmonella gallinarum (strain 287/91 / NCTC 13346)</name>
    <dbReference type="NCBI Taxonomy" id="550538"/>
    <lineage>
        <taxon>Bacteria</taxon>
        <taxon>Pseudomonadati</taxon>
        <taxon>Pseudomonadota</taxon>
        <taxon>Gammaproteobacteria</taxon>
        <taxon>Enterobacterales</taxon>
        <taxon>Enterobacteriaceae</taxon>
        <taxon>Salmonella</taxon>
    </lineage>
</organism>
<protein>
    <recommendedName>
        <fullName evidence="1">D-cysteine desulfhydrase</fullName>
        <ecNumber evidence="1">4.4.1.15</ecNumber>
    </recommendedName>
</protein>
<gene>
    <name evidence="1" type="primary">dcyD</name>
    <name type="ordered locus">SG1101</name>
</gene>
<proteinExistence type="inferred from homology"/>
<feature type="chain" id="PRO_1000136168" description="D-cysteine desulfhydrase">
    <location>
        <begin position="1"/>
        <end position="328"/>
    </location>
</feature>
<feature type="modified residue" description="N6-(pyridoxal phosphate)lysine" evidence="1">
    <location>
        <position position="51"/>
    </location>
</feature>
<name>DCYD_SALG2</name>
<dbReference type="EC" id="4.4.1.15" evidence="1"/>
<dbReference type="EMBL" id="AM933173">
    <property type="protein sequence ID" value="CAR36986.1"/>
    <property type="molecule type" value="Genomic_DNA"/>
</dbReference>
<dbReference type="RefSeq" id="WP_001128188.1">
    <property type="nucleotide sequence ID" value="NC_011274.1"/>
</dbReference>
<dbReference type="SMR" id="B5R890"/>
<dbReference type="KEGG" id="seg:SG1101"/>
<dbReference type="HOGENOM" id="CLU_048897_1_0_6"/>
<dbReference type="Proteomes" id="UP000008321">
    <property type="component" value="Chromosome"/>
</dbReference>
<dbReference type="GO" id="GO:0019148">
    <property type="term" value="F:D-cysteine desulfhydrase activity"/>
    <property type="evidence" value="ECO:0007669"/>
    <property type="project" value="UniProtKB-UniRule"/>
</dbReference>
<dbReference type="GO" id="GO:0046416">
    <property type="term" value="P:D-amino acid metabolic process"/>
    <property type="evidence" value="ECO:0007669"/>
    <property type="project" value="UniProtKB-UniRule"/>
</dbReference>
<dbReference type="CDD" id="cd06449">
    <property type="entry name" value="ACCD"/>
    <property type="match status" value="1"/>
</dbReference>
<dbReference type="FunFam" id="3.40.50.1100:FF:000019">
    <property type="entry name" value="D-cysteine desulfhydrase"/>
    <property type="match status" value="1"/>
</dbReference>
<dbReference type="Gene3D" id="3.40.50.1100">
    <property type="match status" value="2"/>
</dbReference>
<dbReference type="HAMAP" id="MF_01045">
    <property type="entry name" value="D_Cys_desulfhydr"/>
    <property type="match status" value="1"/>
</dbReference>
<dbReference type="InterPro" id="IPR027278">
    <property type="entry name" value="ACCD_DCysDesulf"/>
</dbReference>
<dbReference type="InterPro" id="IPR005966">
    <property type="entry name" value="D-Cys_desShydrase"/>
</dbReference>
<dbReference type="InterPro" id="IPR023702">
    <property type="entry name" value="D_Cys_desulphydr_bac"/>
</dbReference>
<dbReference type="InterPro" id="IPR001926">
    <property type="entry name" value="TrpB-like_PALP"/>
</dbReference>
<dbReference type="InterPro" id="IPR036052">
    <property type="entry name" value="TrpB-like_PALP_sf"/>
</dbReference>
<dbReference type="NCBIfam" id="TIGR01275">
    <property type="entry name" value="ACC_deam_rel"/>
    <property type="match status" value="1"/>
</dbReference>
<dbReference type="NCBIfam" id="NF003029">
    <property type="entry name" value="PRK03910.1-1"/>
    <property type="match status" value="1"/>
</dbReference>
<dbReference type="NCBIfam" id="NF003030">
    <property type="entry name" value="PRK03910.1-3"/>
    <property type="match status" value="1"/>
</dbReference>
<dbReference type="NCBIfam" id="NF003032">
    <property type="entry name" value="PRK03910.1-5"/>
    <property type="match status" value="1"/>
</dbReference>
<dbReference type="PANTHER" id="PTHR43780">
    <property type="entry name" value="1-AMINOCYCLOPROPANE-1-CARBOXYLATE DEAMINASE-RELATED"/>
    <property type="match status" value="1"/>
</dbReference>
<dbReference type="PANTHER" id="PTHR43780:SF2">
    <property type="entry name" value="1-AMINOCYCLOPROPANE-1-CARBOXYLATE DEAMINASE-RELATED"/>
    <property type="match status" value="1"/>
</dbReference>
<dbReference type="Pfam" id="PF00291">
    <property type="entry name" value="PALP"/>
    <property type="match status" value="1"/>
</dbReference>
<dbReference type="PIRSF" id="PIRSF006278">
    <property type="entry name" value="ACCD_DCysDesulf"/>
    <property type="match status" value="1"/>
</dbReference>
<dbReference type="SUPFAM" id="SSF53686">
    <property type="entry name" value="Tryptophan synthase beta subunit-like PLP-dependent enzymes"/>
    <property type="match status" value="1"/>
</dbReference>
<reference key="1">
    <citation type="journal article" date="2008" name="Genome Res.">
        <title>Comparative genome analysis of Salmonella enteritidis PT4 and Salmonella gallinarum 287/91 provides insights into evolutionary and host adaptation pathways.</title>
        <authorList>
            <person name="Thomson N.R."/>
            <person name="Clayton D.J."/>
            <person name="Windhorst D."/>
            <person name="Vernikos G."/>
            <person name="Davidson S."/>
            <person name="Churcher C."/>
            <person name="Quail M.A."/>
            <person name="Stevens M."/>
            <person name="Jones M.A."/>
            <person name="Watson M."/>
            <person name="Barron A."/>
            <person name="Layton A."/>
            <person name="Pickard D."/>
            <person name="Kingsley R.A."/>
            <person name="Bignell A."/>
            <person name="Clark L."/>
            <person name="Harris B."/>
            <person name="Ormond D."/>
            <person name="Abdellah Z."/>
            <person name="Brooks K."/>
            <person name="Cherevach I."/>
            <person name="Chillingworth T."/>
            <person name="Woodward J."/>
            <person name="Norberczak H."/>
            <person name="Lord A."/>
            <person name="Arrowsmith C."/>
            <person name="Jagels K."/>
            <person name="Moule S."/>
            <person name="Mungall K."/>
            <person name="Saunders M."/>
            <person name="Whitehead S."/>
            <person name="Chabalgoity J.A."/>
            <person name="Maskell D."/>
            <person name="Humphreys T."/>
            <person name="Roberts M."/>
            <person name="Barrow P.A."/>
            <person name="Dougan G."/>
            <person name="Parkhill J."/>
        </authorList>
    </citation>
    <scope>NUCLEOTIDE SEQUENCE [LARGE SCALE GENOMIC DNA]</scope>
    <source>
        <strain>287/91 / NCTC 13346</strain>
    </source>
</reference>